<proteinExistence type="inferred from homology"/>
<keyword id="KW-0004">4Fe-4S</keyword>
<keyword id="KW-0963">Cytoplasm</keyword>
<keyword id="KW-0408">Iron</keyword>
<keyword id="KW-0411">Iron-sulfur</keyword>
<keyword id="KW-0479">Metal-binding</keyword>
<keyword id="KW-0662">Pyridine nucleotide biosynthesis</keyword>
<keyword id="KW-0808">Transferase</keyword>
<protein>
    <recommendedName>
        <fullName evidence="1">Quinolinate synthase</fullName>
        <ecNumber evidence="1">2.5.1.72</ecNumber>
    </recommendedName>
</protein>
<name>NADA_CALS8</name>
<organism>
    <name type="scientific">Caldicellulosiruptor saccharolyticus (strain ATCC 43494 / DSM 8903 / Tp8T 6331)</name>
    <dbReference type="NCBI Taxonomy" id="351627"/>
    <lineage>
        <taxon>Bacteria</taxon>
        <taxon>Bacillati</taxon>
        <taxon>Bacillota</taxon>
        <taxon>Bacillota incertae sedis</taxon>
        <taxon>Caldicellulosiruptorales</taxon>
        <taxon>Caldicellulosiruptoraceae</taxon>
        <taxon>Caldicellulosiruptor</taxon>
    </lineage>
</organism>
<accession>A4XKC7</accession>
<dbReference type="EC" id="2.5.1.72" evidence="1"/>
<dbReference type="EMBL" id="CP000679">
    <property type="protein sequence ID" value="ABP67362.1"/>
    <property type="molecule type" value="Genomic_DNA"/>
</dbReference>
<dbReference type="RefSeq" id="WP_011917296.1">
    <property type="nucleotide sequence ID" value="NC_009437.1"/>
</dbReference>
<dbReference type="SMR" id="A4XKC7"/>
<dbReference type="STRING" id="351627.Csac_1777"/>
<dbReference type="KEGG" id="csc:Csac_1777"/>
<dbReference type="eggNOG" id="COG0379">
    <property type="taxonomic scope" value="Bacteria"/>
</dbReference>
<dbReference type="HOGENOM" id="CLU_047382_0_0_9"/>
<dbReference type="OrthoDB" id="9801204at2"/>
<dbReference type="UniPathway" id="UPA00253">
    <property type="reaction ID" value="UER00327"/>
</dbReference>
<dbReference type="Proteomes" id="UP000000256">
    <property type="component" value="Chromosome"/>
</dbReference>
<dbReference type="GO" id="GO:0005829">
    <property type="term" value="C:cytosol"/>
    <property type="evidence" value="ECO:0007669"/>
    <property type="project" value="TreeGrafter"/>
</dbReference>
<dbReference type="GO" id="GO:0051539">
    <property type="term" value="F:4 iron, 4 sulfur cluster binding"/>
    <property type="evidence" value="ECO:0007669"/>
    <property type="project" value="UniProtKB-KW"/>
</dbReference>
<dbReference type="GO" id="GO:0046872">
    <property type="term" value="F:metal ion binding"/>
    <property type="evidence" value="ECO:0007669"/>
    <property type="project" value="UniProtKB-KW"/>
</dbReference>
<dbReference type="GO" id="GO:0008987">
    <property type="term" value="F:quinolinate synthetase A activity"/>
    <property type="evidence" value="ECO:0007669"/>
    <property type="project" value="UniProtKB-UniRule"/>
</dbReference>
<dbReference type="GO" id="GO:0034628">
    <property type="term" value="P:'de novo' NAD biosynthetic process from L-aspartate"/>
    <property type="evidence" value="ECO:0007669"/>
    <property type="project" value="TreeGrafter"/>
</dbReference>
<dbReference type="FunFam" id="3.40.50.10800:FF:000001">
    <property type="entry name" value="Quinolinate synthase A"/>
    <property type="match status" value="1"/>
</dbReference>
<dbReference type="FunFam" id="3.40.50.10800:FF:000003">
    <property type="entry name" value="Quinolinate synthase A"/>
    <property type="match status" value="1"/>
</dbReference>
<dbReference type="Gene3D" id="3.40.50.10800">
    <property type="entry name" value="NadA-like"/>
    <property type="match status" value="3"/>
</dbReference>
<dbReference type="HAMAP" id="MF_00568">
    <property type="entry name" value="NadA_type2"/>
    <property type="match status" value="1"/>
</dbReference>
<dbReference type="InterPro" id="IPR003473">
    <property type="entry name" value="NadA"/>
</dbReference>
<dbReference type="InterPro" id="IPR036094">
    <property type="entry name" value="NadA_sf"/>
</dbReference>
<dbReference type="InterPro" id="IPR023066">
    <property type="entry name" value="Quinolinate_synth_type2"/>
</dbReference>
<dbReference type="NCBIfam" id="TIGR00550">
    <property type="entry name" value="nadA"/>
    <property type="match status" value="1"/>
</dbReference>
<dbReference type="NCBIfam" id="NF006878">
    <property type="entry name" value="PRK09375.1-2"/>
    <property type="match status" value="1"/>
</dbReference>
<dbReference type="NCBIfam" id="NF006879">
    <property type="entry name" value="PRK09375.1-4"/>
    <property type="match status" value="1"/>
</dbReference>
<dbReference type="PANTHER" id="PTHR30573:SF0">
    <property type="entry name" value="QUINOLINATE SYNTHASE, CHLOROPLASTIC"/>
    <property type="match status" value="1"/>
</dbReference>
<dbReference type="PANTHER" id="PTHR30573">
    <property type="entry name" value="QUINOLINATE SYNTHETASE A"/>
    <property type="match status" value="1"/>
</dbReference>
<dbReference type="Pfam" id="PF02445">
    <property type="entry name" value="NadA"/>
    <property type="match status" value="1"/>
</dbReference>
<dbReference type="SUPFAM" id="SSF142754">
    <property type="entry name" value="NadA-like"/>
    <property type="match status" value="1"/>
</dbReference>
<sequence length="303" mass="34444">MDIEKIKREIEELKRQKNAIIVAHNYQIDEIQEIADFVGDSFYLSKVCAERTEDVIVFCGVHFMAESAKILSPQKKVLLPEIDAGCPLADMITEEDVDSLKEKYPDYSIVCYINSPAAVKAKSDVICTSSNAVKIVRNFPNDKIIFLPDKNLGSFVKKQVPEKDIILWEGFCITHYKIKKEDVLKAKEAHPEALLLVHPECRPEVVELADFVGSTKQIIDFATSSKAKEFIIGTEMGILYSLKKRNPDKKFYILHPGMICPNMKKNTLESVRNALLYDRYEINIEENVVEGARKALLKMLELS</sequence>
<feature type="chain" id="PRO_1000061148" description="Quinolinate synthase">
    <location>
        <begin position="1"/>
        <end position="303"/>
    </location>
</feature>
<feature type="binding site" evidence="1">
    <location>
        <position position="24"/>
    </location>
    <ligand>
        <name>iminosuccinate</name>
        <dbReference type="ChEBI" id="CHEBI:77875"/>
    </ligand>
</feature>
<feature type="binding site" evidence="1">
    <location>
        <position position="41"/>
    </location>
    <ligand>
        <name>iminosuccinate</name>
        <dbReference type="ChEBI" id="CHEBI:77875"/>
    </ligand>
</feature>
<feature type="binding site" evidence="1">
    <location>
        <position position="86"/>
    </location>
    <ligand>
        <name>[4Fe-4S] cluster</name>
        <dbReference type="ChEBI" id="CHEBI:49883"/>
    </ligand>
</feature>
<feature type="binding site" evidence="1">
    <location>
        <begin position="112"/>
        <end position="114"/>
    </location>
    <ligand>
        <name>iminosuccinate</name>
        <dbReference type="ChEBI" id="CHEBI:77875"/>
    </ligand>
</feature>
<feature type="binding site" evidence="1">
    <location>
        <position position="129"/>
    </location>
    <ligand>
        <name>iminosuccinate</name>
        <dbReference type="ChEBI" id="CHEBI:77875"/>
    </ligand>
</feature>
<feature type="binding site" evidence="1">
    <location>
        <position position="172"/>
    </location>
    <ligand>
        <name>[4Fe-4S] cluster</name>
        <dbReference type="ChEBI" id="CHEBI:49883"/>
    </ligand>
</feature>
<feature type="binding site" evidence="1">
    <location>
        <begin position="198"/>
        <end position="200"/>
    </location>
    <ligand>
        <name>iminosuccinate</name>
        <dbReference type="ChEBI" id="CHEBI:77875"/>
    </ligand>
</feature>
<feature type="binding site" evidence="1">
    <location>
        <position position="215"/>
    </location>
    <ligand>
        <name>iminosuccinate</name>
        <dbReference type="ChEBI" id="CHEBI:77875"/>
    </ligand>
</feature>
<feature type="binding site" evidence="1">
    <location>
        <position position="260"/>
    </location>
    <ligand>
        <name>[4Fe-4S] cluster</name>
        <dbReference type="ChEBI" id="CHEBI:49883"/>
    </ligand>
</feature>
<evidence type="ECO:0000255" key="1">
    <source>
        <dbReference type="HAMAP-Rule" id="MF_00568"/>
    </source>
</evidence>
<gene>
    <name evidence="1" type="primary">nadA</name>
    <name type="ordered locus">Csac_1777</name>
</gene>
<comment type="function">
    <text evidence="1">Catalyzes the condensation of iminoaspartate with dihydroxyacetone phosphate to form quinolinate.</text>
</comment>
<comment type="catalytic activity">
    <reaction evidence="1">
        <text>iminosuccinate + dihydroxyacetone phosphate = quinolinate + phosphate + 2 H2O + H(+)</text>
        <dbReference type="Rhea" id="RHEA:25888"/>
        <dbReference type="ChEBI" id="CHEBI:15377"/>
        <dbReference type="ChEBI" id="CHEBI:15378"/>
        <dbReference type="ChEBI" id="CHEBI:29959"/>
        <dbReference type="ChEBI" id="CHEBI:43474"/>
        <dbReference type="ChEBI" id="CHEBI:57642"/>
        <dbReference type="ChEBI" id="CHEBI:77875"/>
        <dbReference type="EC" id="2.5.1.72"/>
    </reaction>
    <physiologicalReaction direction="left-to-right" evidence="1">
        <dbReference type="Rhea" id="RHEA:25889"/>
    </physiologicalReaction>
</comment>
<comment type="cofactor">
    <cofactor evidence="1">
        <name>[4Fe-4S] cluster</name>
        <dbReference type="ChEBI" id="CHEBI:49883"/>
    </cofactor>
    <text evidence="1">Binds 1 [4Fe-4S] cluster per subunit.</text>
</comment>
<comment type="pathway">
    <text evidence="1">Cofactor biosynthesis; NAD(+) biosynthesis; quinolinate from iminoaspartate: step 1/1.</text>
</comment>
<comment type="subcellular location">
    <subcellularLocation>
        <location evidence="1">Cytoplasm</location>
    </subcellularLocation>
</comment>
<comment type="similarity">
    <text evidence="1">Belongs to the quinolinate synthase family. Type 2 subfamily.</text>
</comment>
<reference key="1">
    <citation type="submission" date="2007-04" db="EMBL/GenBank/DDBJ databases">
        <title>Genome sequence of the thermophilic hydrogen-producing bacterium Caldicellulosiruptor saccharolyticus DSM 8903.</title>
        <authorList>
            <person name="Copeland A."/>
            <person name="Lucas S."/>
            <person name="Lapidus A."/>
            <person name="Barry K."/>
            <person name="Detter J.C."/>
            <person name="Glavina del Rio T."/>
            <person name="Hammon N."/>
            <person name="Israni S."/>
            <person name="Dalin E."/>
            <person name="Tice H."/>
            <person name="Pitluck S."/>
            <person name="Kiss H."/>
            <person name="Brettin T."/>
            <person name="Bruce D."/>
            <person name="Han C."/>
            <person name="Schmutz J."/>
            <person name="Larimer F."/>
            <person name="Land M."/>
            <person name="Hauser L."/>
            <person name="Kyrpides N."/>
            <person name="Lykidis A."/>
            <person name="van de Werken H.J.G."/>
            <person name="Verhaart M.R.A."/>
            <person name="VanFossen A.L."/>
            <person name="Lewis D.L."/>
            <person name="Nichols J.D."/>
            <person name="Goorissen H.P."/>
            <person name="van Niel E.W.J."/>
            <person name="Stams F.J.M."/>
            <person name="Willquist K.U."/>
            <person name="Ward D.E."/>
            <person name="van der Oost J."/>
            <person name="Kelly R.M."/>
            <person name="Kengen S.M.W."/>
            <person name="Richardson P."/>
        </authorList>
    </citation>
    <scope>NUCLEOTIDE SEQUENCE [LARGE SCALE GENOMIC DNA]</scope>
    <source>
        <strain>ATCC 43494 / DSM 8903 / Tp8T 6331</strain>
    </source>
</reference>